<sequence length="262" mass="29272">MCGIFGYCNFLIEKTRGEIIDTLIEGLQALEYKEYDSSGISIQGDELESLNIYKQTGKISSLKEEIDLYNLNKNLPFISHCGIAHTRRATHGGLRRANCHPHNSDPSNEFVVVHNGVITNFANLKALLMAKGYVFKSDTDTECIPKLYKHIYDTSIELGYNLDFHVLTNLVLKELEGSYGLLCTSSHFPDEVVAARKGSPLVIGVKGKTDMDVNFVEVEYLDQEEDYLKLNTQTKSSGNVLAAAPVKYNTCLRKSPPFVHNT</sequence>
<comment type="function">
    <text evidence="1">Involved in amino sugar synthesis (formation of chitin, supplies the amino sugars of asparagine-linked oligosaccharides of glycoproteins).</text>
</comment>
<comment type="catalytic activity">
    <reaction>
        <text>D-fructose 6-phosphate + L-glutamine = D-glucosamine 6-phosphate + L-glutamate</text>
        <dbReference type="Rhea" id="RHEA:13237"/>
        <dbReference type="ChEBI" id="CHEBI:29985"/>
        <dbReference type="ChEBI" id="CHEBI:58359"/>
        <dbReference type="ChEBI" id="CHEBI:58725"/>
        <dbReference type="ChEBI" id="CHEBI:61527"/>
        <dbReference type="EC" id="2.6.1.16"/>
    </reaction>
</comment>
<comment type="pathway">
    <text>Nucleotide-sugar biosynthesis; UDP-N-acetyl-alpha-D-glucosamine biosynthesis; alpha-D-glucosamine 6-phosphate from D-fructose 6-phosphate: step 1/1.</text>
</comment>
<comment type="caution">
    <text evidence="3">This is a truncated version of a putative glutamine--fructose-6-phosphate aminotransferase. Strain S288c has a frameshift in position 258, which disrupts the gene coding for this protein and produces two ORFs YMR084W and YMR085W. A contiguous sequence for this protein can be found in strain YJM789 (AC A6ZME2).</text>
</comment>
<gene>
    <name type="ordered locus">YMR084W</name>
</gene>
<evidence type="ECO:0000250" key="1"/>
<evidence type="ECO:0000255" key="2">
    <source>
        <dbReference type="PROSITE-ProRule" id="PRU00609"/>
    </source>
</evidence>
<evidence type="ECO:0000305" key="3"/>
<proteinExistence type="inferred from homology"/>
<keyword id="KW-0032">Aminotransferase</keyword>
<keyword id="KW-0315">Glutamine amidotransferase</keyword>
<keyword id="KW-1185">Reference proteome</keyword>
<keyword id="KW-0808">Transferase</keyword>
<organism>
    <name type="scientific">Saccharomyces cerevisiae (strain ATCC 204508 / S288c)</name>
    <name type="common">Baker's yeast</name>
    <dbReference type="NCBI Taxonomy" id="559292"/>
    <lineage>
        <taxon>Eukaryota</taxon>
        <taxon>Fungi</taxon>
        <taxon>Dikarya</taxon>
        <taxon>Ascomycota</taxon>
        <taxon>Saccharomycotina</taxon>
        <taxon>Saccharomycetes</taxon>
        <taxon>Saccharomycetales</taxon>
        <taxon>Saccharomycetaceae</taxon>
        <taxon>Saccharomyces</taxon>
    </lineage>
</organism>
<accession>A2P2R3</accession>
<accession>D6VZQ7</accession>
<accession>E9P8R5</accession>
<accession>Q3E7C0</accession>
<accession>Q6B308</accession>
<accession>Q6WV01</accession>
<name>YM084_YEAST</name>
<feature type="chain" id="PRO_0000269757" description="Putative glutamine--fructose-6-phosphate aminotransferase [isomerizing]">
    <location>
        <begin position="1"/>
        <end position="262"/>
    </location>
</feature>
<feature type="domain" description="Glutamine amidotransferase type-2" evidence="2">
    <location>
        <begin position="2"/>
        <end position="262"/>
    </location>
</feature>
<feature type="active site" description="Nucleophile; for GATase activity" evidence="2">
    <location>
        <position position="2"/>
    </location>
</feature>
<protein>
    <recommendedName>
        <fullName>Putative glutamine--fructose-6-phosphate aminotransferase [isomerizing]</fullName>
        <shortName>GFAT</shortName>
        <ecNumber>2.6.1.16</ecNumber>
    </recommendedName>
    <alternativeName>
        <fullName>D-fructose-6-phosphate amidotransferase</fullName>
    </alternativeName>
    <alternativeName>
        <fullName>Hexosephosphate aminotransferase</fullName>
    </alternativeName>
</protein>
<dbReference type="EC" id="2.6.1.16"/>
<dbReference type="EMBL" id="Z49259">
    <property type="protein sequence ID" value="CAA89230.1"/>
    <property type="molecule type" value="Genomic_DNA"/>
</dbReference>
<dbReference type="EMBL" id="AY692572">
    <property type="protein sequence ID" value="AAT92591.1"/>
    <property type="molecule type" value="Genomic_DNA"/>
</dbReference>
<dbReference type="EMBL" id="AY268137">
    <property type="protein sequence ID" value="AAR26283.1"/>
    <property type="molecule type" value="Genomic_DNA"/>
</dbReference>
<dbReference type="EMBL" id="BK006946">
    <property type="protein sequence ID" value="DAA09981.1"/>
    <property type="molecule type" value="Genomic_DNA"/>
</dbReference>
<dbReference type="PIR" id="S54459">
    <property type="entry name" value="S54459"/>
</dbReference>
<dbReference type="RefSeq" id="NP_013801.1">
    <property type="nucleotide sequence ID" value="NM_001182583.1"/>
</dbReference>
<dbReference type="SMR" id="A2P2R3"/>
<dbReference type="BioGRID" id="35259">
    <property type="interactions" value="80"/>
</dbReference>
<dbReference type="FunCoup" id="A2P2R3">
    <property type="interactions" value="110"/>
</dbReference>
<dbReference type="STRING" id="4932.YMR084W"/>
<dbReference type="PaxDb" id="4932-YMR084W"/>
<dbReference type="EnsemblFungi" id="YMR084W_mRNA">
    <property type="protein sequence ID" value="YMR084W"/>
    <property type="gene ID" value="YMR084W"/>
</dbReference>
<dbReference type="GeneID" id="855108"/>
<dbReference type="KEGG" id="sce:YMR084W"/>
<dbReference type="AGR" id="SGD:S000004689"/>
<dbReference type="SGD" id="S000004689">
    <property type="gene designation" value="YMR084W"/>
</dbReference>
<dbReference type="VEuPathDB" id="FungiDB:YMR084W"/>
<dbReference type="eggNOG" id="KOG1268">
    <property type="taxonomic scope" value="Eukaryota"/>
</dbReference>
<dbReference type="GeneTree" id="ENSGT00940000173234"/>
<dbReference type="HOGENOM" id="CLU_012520_6_2_1"/>
<dbReference type="InParanoid" id="A2P2R3"/>
<dbReference type="OrthoDB" id="15235at2759"/>
<dbReference type="BioCyc" id="YEAST:G3O-32784-MONOMER"/>
<dbReference type="UniPathway" id="UPA00113">
    <property type="reaction ID" value="UER00528"/>
</dbReference>
<dbReference type="BioGRID-ORCS" id="855108">
    <property type="hits" value="1 hit in 10 CRISPR screens"/>
</dbReference>
<dbReference type="PRO" id="PR:A2P2R3"/>
<dbReference type="Proteomes" id="UP000002311">
    <property type="component" value="Chromosome XIII"/>
</dbReference>
<dbReference type="RNAct" id="A2P2R3">
    <property type="molecule type" value="protein"/>
</dbReference>
<dbReference type="GO" id="GO:0004360">
    <property type="term" value="F:glutamine-fructose-6-phosphate transaminase (isomerizing) activity"/>
    <property type="evidence" value="ECO:0000318"/>
    <property type="project" value="GO_Central"/>
</dbReference>
<dbReference type="GO" id="GO:0006031">
    <property type="term" value="P:chitin biosynthetic process"/>
    <property type="evidence" value="ECO:0000318"/>
    <property type="project" value="GO_Central"/>
</dbReference>
<dbReference type="GO" id="GO:0006002">
    <property type="term" value="P:fructose 6-phosphate metabolic process"/>
    <property type="evidence" value="ECO:0000318"/>
    <property type="project" value="GO_Central"/>
</dbReference>
<dbReference type="GO" id="GO:0006487">
    <property type="term" value="P:protein N-linked glycosylation"/>
    <property type="evidence" value="ECO:0000318"/>
    <property type="project" value="GO_Central"/>
</dbReference>
<dbReference type="GO" id="GO:0006048">
    <property type="term" value="P:UDP-N-acetylglucosamine biosynthetic process"/>
    <property type="evidence" value="ECO:0007669"/>
    <property type="project" value="UniProtKB-UniPathway"/>
</dbReference>
<dbReference type="GO" id="GO:0006047">
    <property type="term" value="P:UDP-N-acetylglucosamine metabolic process"/>
    <property type="evidence" value="ECO:0000318"/>
    <property type="project" value="GO_Central"/>
</dbReference>
<dbReference type="CDD" id="cd00714">
    <property type="entry name" value="GFAT"/>
    <property type="match status" value="1"/>
</dbReference>
<dbReference type="FunFam" id="3.60.20.10:FF:000148">
    <property type="entry name" value="Putative glutamine--fructose-6-phosphate aminotransferase [isomerizing]"/>
    <property type="match status" value="1"/>
</dbReference>
<dbReference type="Gene3D" id="3.60.20.10">
    <property type="entry name" value="Glutamine Phosphoribosylpyrophosphate, subunit 1, domain 1"/>
    <property type="match status" value="1"/>
</dbReference>
<dbReference type="InterPro" id="IPR017932">
    <property type="entry name" value="GATase_2_dom"/>
</dbReference>
<dbReference type="InterPro" id="IPR047084">
    <property type="entry name" value="GFAT_N"/>
</dbReference>
<dbReference type="InterPro" id="IPR029055">
    <property type="entry name" value="Ntn_hydrolases_N"/>
</dbReference>
<dbReference type="PANTHER" id="PTHR10937">
    <property type="entry name" value="GLUCOSAMINE--FRUCTOSE-6-PHOSPHATE AMINOTRANSFERASE, ISOMERIZING"/>
    <property type="match status" value="1"/>
</dbReference>
<dbReference type="PANTHER" id="PTHR10937:SF0">
    <property type="entry name" value="GLUTAMINE--FRUCTOSE-6-PHOSPHATE TRANSAMINASE (ISOMERIZING)"/>
    <property type="match status" value="1"/>
</dbReference>
<dbReference type="Pfam" id="PF13522">
    <property type="entry name" value="GATase_6"/>
    <property type="match status" value="1"/>
</dbReference>
<dbReference type="SUPFAM" id="SSF56235">
    <property type="entry name" value="N-terminal nucleophile aminohydrolases (Ntn hydrolases)"/>
    <property type="match status" value="1"/>
</dbReference>
<dbReference type="PROSITE" id="PS51278">
    <property type="entry name" value="GATASE_TYPE_2"/>
    <property type="match status" value="1"/>
</dbReference>
<reference key="1">
    <citation type="journal article" date="1997" name="Nature">
        <title>The nucleotide sequence of Saccharomyces cerevisiae chromosome XIII.</title>
        <authorList>
            <person name="Bowman S."/>
            <person name="Churcher C.M."/>
            <person name="Badcock K."/>
            <person name="Brown D."/>
            <person name="Chillingworth T."/>
            <person name="Connor R."/>
            <person name="Dedman K."/>
            <person name="Devlin K."/>
            <person name="Gentles S."/>
            <person name="Hamlin N."/>
            <person name="Hunt S."/>
            <person name="Jagels K."/>
            <person name="Lye G."/>
            <person name="Moule S."/>
            <person name="Odell C."/>
            <person name="Pearson D."/>
            <person name="Rajandream M.A."/>
            <person name="Rice P."/>
            <person name="Skelton J."/>
            <person name="Walsh S.V."/>
            <person name="Whitehead S."/>
            <person name="Barrell B.G."/>
        </authorList>
    </citation>
    <scope>NUCLEOTIDE SEQUENCE [LARGE SCALE GENOMIC DNA]</scope>
    <source>
        <strain>ATCC 204508 / S288c</strain>
    </source>
</reference>
<reference key="2">
    <citation type="journal article" date="2014" name="G3 (Bethesda)">
        <title>The reference genome sequence of Saccharomyces cerevisiae: Then and now.</title>
        <authorList>
            <person name="Engel S.R."/>
            <person name="Dietrich F.S."/>
            <person name="Fisk D.G."/>
            <person name="Binkley G."/>
            <person name="Balakrishnan R."/>
            <person name="Costanzo M.C."/>
            <person name="Dwight S.S."/>
            <person name="Hitz B.C."/>
            <person name="Karra K."/>
            <person name="Nash R.S."/>
            <person name="Weng S."/>
            <person name="Wong E.D."/>
            <person name="Lloyd P."/>
            <person name="Skrzypek M.S."/>
            <person name="Miyasato S.R."/>
            <person name="Simison M."/>
            <person name="Cherry J.M."/>
        </authorList>
    </citation>
    <scope>GENOME REANNOTATION</scope>
    <source>
        <strain>ATCC 204508 / S288c</strain>
    </source>
</reference>
<reference key="3">
    <citation type="journal article" date="2007" name="Genome Res.">
        <title>Approaching a complete repository of sequence-verified protein-encoding clones for Saccharomyces cerevisiae.</title>
        <authorList>
            <person name="Hu Y."/>
            <person name="Rolfs A."/>
            <person name="Bhullar B."/>
            <person name="Murthy T.V.S."/>
            <person name="Zhu C."/>
            <person name="Berger M.F."/>
            <person name="Camargo A.A."/>
            <person name="Kelley F."/>
            <person name="McCarron S."/>
            <person name="Jepson D."/>
            <person name="Richardson A."/>
            <person name="Raphael J."/>
            <person name="Moreira D."/>
            <person name="Taycher E."/>
            <person name="Zuo D."/>
            <person name="Mohr S."/>
            <person name="Kane M.F."/>
            <person name="Williamson J."/>
            <person name="Simpson A.J.G."/>
            <person name="Bulyk M.L."/>
            <person name="Harlow E."/>
            <person name="Marsischky G."/>
            <person name="Kolodner R.D."/>
            <person name="LaBaer J."/>
        </authorList>
    </citation>
    <scope>NUCLEOTIDE SEQUENCE [GENOMIC DNA]</scope>
    <source>
        <strain>ATCC 204508 / S288c</strain>
    </source>
</reference>
<reference key="4">
    <citation type="journal article" date="2003" name="Genome Biol.">
        <title>Reinvestigation of the Saccharomyces cerevisiae genome annotation by comparison to the genome of a related fungus: Ashbya gossypii.</title>
        <authorList>
            <person name="Brachat S."/>
            <person name="Dietrich F.S."/>
            <person name="Voegeli S."/>
            <person name="Zhang Z."/>
            <person name="Stuart L."/>
            <person name="Lerch A."/>
            <person name="Gates K."/>
            <person name="Gaffney T.D."/>
            <person name="Philippsen P."/>
        </authorList>
    </citation>
    <scope>NUCLEOTIDE SEQUENCE [GENOMIC DNA] OF 246-262</scope>
    <scope>CONFIRMATION OF FRAMESHIFT</scope>
    <source>
        <strain>ATCC 204511 / S288c / AB972</strain>
    </source>
</reference>